<name>RNH2_CLOTE</name>
<dbReference type="EC" id="3.1.26.4" evidence="1"/>
<dbReference type="EMBL" id="AE015927">
    <property type="protein sequence ID" value="AAO35822.1"/>
    <property type="molecule type" value="Genomic_DNA"/>
</dbReference>
<dbReference type="SMR" id="Q895L8"/>
<dbReference type="STRING" id="212717.CTC_01255"/>
<dbReference type="KEGG" id="ctc:CTC_01255"/>
<dbReference type="HOGENOM" id="CLU_036532_2_1_9"/>
<dbReference type="OrthoDB" id="9803420at2"/>
<dbReference type="Proteomes" id="UP000001412">
    <property type="component" value="Chromosome"/>
</dbReference>
<dbReference type="GO" id="GO:0005737">
    <property type="term" value="C:cytoplasm"/>
    <property type="evidence" value="ECO:0007669"/>
    <property type="project" value="UniProtKB-SubCell"/>
</dbReference>
<dbReference type="GO" id="GO:0032299">
    <property type="term" value="C:ribonuclease H2 complex"/>
    <property type="evidence" value="ECO:0007669"/>
    <property type="project" value="TreeGrafter"/>
</dbReference>
<dbReference type="GO" id="GO:0030145">
    <property type="term" value="F:manganese ion binding"/>
    <property type="evidence" value="ECO:0007669"/>
    <property type="project" value="UniProtKB-UniRule"/>
</dbReference>
<dbReference type="GO" id="GO:0003723">
    <property type="term" value="F:RNA binding"/>
    <property type="evidence" value="ECO:0007669"/>
    <property type="project" value="InterPro"/>
</dbReference>
<dbReference type="GO" id="GO:0004523">
    <property type="term" value="F:RNA-DNA hybrid ribonuclease activity"/>
    <property type="evidence" value="ECO:0007669"/>
    <property type="project" value="UniProtKB-UniRule"/>
</dbReference>
<dbReference type="GO" id="GO:0043137">
    <property type="term" value="P:DNA replication, removal of RNA primer"/>
    <property type="evidence" value="ECO:0007669"/>
    <property type="project" value="TreeGrafter"/>
</dbReference>
<dbReference type="GO" id="GO:0006298">
    <property type="term" value="P:mismatch repair"/>
    <property type="evidence" value="ECO:0007669"/>
    <property type="project" value="TreeGrafter"/>
</dbReference>
<dbReference type="CDD" id="cd07182">
    <property type="entry name" value="RNase_HII_bacteria_HII_like"/>
    <property type="match status" value="1"/>
</dbReference>
<dbReference type="Gene3D" id="3.30.420.10">
    <property type="entry name" value="Ribonuclease H-like superfamily/Ribonuclease H"/>
    <property type="match status" value="1"/>
</dbReference>
<dbReference type="HAMAP" id="MF_00052_B">
    <property type="entry name" value="RNase_HII_B"/>
    <property type="match status" value="1"/>
</dbReference>
<dbReference type="InterPro" id="IPR022898">
    <property type="entry name" value="RNase_HII"/>
</dbReference>
<dbReference type="InterPro" id="IPR001352">
    <property type="entry name" value="RNase_HII/HIII"/>
</dbReference>
<dbReference type="InterPro" id="IPR024567">
    <property type="entry name" value="RNase_HII/HIII_dom"/>
</dbReference>
<dbReference type="InterPro" id="IPR012337">
    <property type="entry name" value="RNaseH-like_sf"/>
</dbReference>
<dbReference type="InterPro" id="IPR036397">
    <property type="entry name" value="RNaseH_sf"/>
</dbReference>
<dbReference type="NCBIfam" id="NF000594">
    <property type="entry name" value="PRK00015.1-1"/>
    <property type="match status" value="1"/>
</dbReference>
<dbReference type="NCBIfam" id="NF000595">
    <property type="entry name" value="PRK00015.1-3"/>
    <property type="match status" value="1"/>
</dbReference>
<dbReference type="PANTHER" id="PTHR10954">
    <property type="entry name" value="RIBONUCLEASE H2 SUBUNIT A"/>
    <property type="match status" value="1"/>
</dbReference>
<dbReference type="PANTHER" id="PTHR10954:SF18">
    <property type="entry name" value="RIBONUCLEASE HII"/>
    <property type="match status" value="1"/>
</dbReference>
<dbReference type="Pfam" id="PF01351">
    <property type="entry name" value="RNase_HII"/>
    <property type="match status" value="1"/>
</dbReference>
<dbReference type="SUPFAM" id="SSF53098">
    <property type="entry name" value="Ribonuclease H-like"/>
    <property type="match status" value="1"/>
</dbReference>
<dbReference type="PROSITE" id="PS51975">
    <property type="entry name" value="RNASE_H_2"/>
    <property type="match status" value="1"/>
</dbReference>
<comment type="function">
    <text evidence="1">Endonuclease that specifically degrades the RNA of RNA-DNA hybrids.</text>
</comment>
<comment type="catalytic activity">
    <reaction evidence="1">
        <text>Endonucleolytic cleavage to 5'-phosphomonoester.</text>
        <dbReference type="EC" id="3.1.26.4"/>
    </reaction>
</comment>
<comment type="cofactor">
    <cofactor evidence="1">
        <name>Mn(2+)</name>
        <dbReference type="ChEBI" id="CHEBI:29035"/>
    </cofactor>
    <cofactor evidence="1">
        <name>Mg(2+)</name>
        <dbReference type="ChEBI" id="CHEBI:18420"/>
    </cofactor>
    <text evidence="1">Manganese or magnesium. Binds 1 divalent metal ion per monomer in the absence of substrate. May bind a second metal ion after substrate binding.</text>
</comment>
<comment type="subcellular location">
    <subcellularLocation>
        <location evidence="1">Cytoplasm</location>
    </subcellularLocation>
</comment>
<comment type="similarity">
    <text evidence="1">Belongs to the RNase HII family.</text>
</comment>
<proteinExistence type="inferred from homology"/>
<reference key="1">
    <citation type="journal article" date="2003" name="Proc. Natl. Acad. Sci. U.S.A.">
        <title>The genome sequence of Clostridium tetani, the causative agent of tetanus disease.</title>
        <authorList>
            <person name="Brueggemann H."/>
            <person name="Baeumer S."/>
            <person name="Fricke W.F."/>
            <person name="Wiezer A."/>
            <person name="Liesegang H."/>
            <person name="Decker I."/>
            <person name="Herzberg C."/>
            <person name="Martinez-Arias R."/>
            <person name="Merkl R."/>
            <person name="Henne A."/>
            <person name="Gottschalk G."/>
        </authorList>
    </citation>
    <scope>NUCLEOTIDE SEQUENCE [LARGE SCALE GENOMIC DNA]</scope>
    <source>
        <strain>Massachusetts / E88</strain>
    </source>
</reference>
<accession>Q895L8</accession>
<keyword id="KW-0963">Cytoplasm</keyword>
<keyword id="KW-0255">Endonuclease</keyword>
<keyword id="KW-0378">Hydrolase</keyword>
<keyword id="KW-0464">Manganese</keyword>
<keyword id="KW-0479">Metal-binding</keyword>
<keyword id="KW-0540">Nuclease</keyword>
<keyword id="KW-1185">Reference proteome</keyword>
<organism>
    <name type="scientific">Clostridium tetani (strain Massachusetts / E88)</name>
    <dbReference type="NCBI Taxonomy" id="212717"/>
    <lineage>
        <taxon>Bacteria</taxon>
        <taxon>Bacillati</taxon>
        <taxon>Bacillota</taxon>
        <taxon>Clostridia</taxon>
        <taxon>Eubacteriales</taxon>
        <taxon>Clostridiaceae</taxon>
        <taxon>Clostridium</taxon>
    </lineage>
</organism>
<protein>
    <recommendedName>
        <fullName evidence="1">Ribonuclease HII</fullName>
        <shortName evidence="1">RNase HII</shortName>
        <ecNumber evidence="1">3.1.26.4</ecNumber>
    </recommendedName>
</protein>
<evidence type="ECO:0000255" key="1">
    <source>
        <dbReference type="HAMAP-Rule" id="MF_00052"/>
    </source>
</evidence>
<evidence type="ECO:0000255" key="2">
    <source>
        <dbReference type="PROSITE-ProRule" id="PRU01319"/>
    </source>
</evidence>
<sequence>MEKEIYKMDFNDMTFKDIKDIVDGMKKVENIECLIYINDILMKDKRKTVQNLSQSINKFICRREEEIVRLKKMYDFDKKFANNVLIAGVDEVGRGPLAGPIVAAAVILDLNYKNHNDLFYGLKDSKKLRAKERENLSHIIKDKALYYNIFELDNHMIDTSGIAWCNNEVLKKSTLGLEVTPGIVISDGFSIKNINIKNEYIIKGDAKSASIAAASIIAKVYRDKKMEEYSKIYPHYGFEKNSGYGTDEHTKALKKYGPCPIHRMSFLSNYI</sequence>
<gene>
    <name evidence="1" type="primary">rnhB</name>
    <name type="ordered locus">CTC_01255</name>
</gene>
<feature type="chain" id="PRO_0000111566" description="Ribonuclease HII">
    <location>
        <begin position="1"/>
        <end position="271"/>
    </location>
</feature>
<feature type="domain" description="RNase H type-2" evidence="2">
    <location>
        <begin position="84"/>
        <end position="271"/>
    </location>
</feature>
<feature type="binding site" evidence="1">
    <location>
        <position position="90"/>
    </location>
    <ligand>
        <name>a divalent metal cation</name>
        <dbReference type="ChEBI" id="CHEBI:60240"/>
    </ligand>
</feature>
<feature type="binding site" evidence="1">
    <location>
        <position position="91"/>
    </location>
    <ligand>
        <name>a divalent metal cation</name>
        <dbReference type="ChEBI" id="CHEBI:60240"/>
    </ligand>
</feature>
<feature type="binding site" evidence="1">
    <location>
        <position position="187"/>
    </location>
    <ligand>
        <name>a divalent metal cation</name>
        <dbReference type="ChEBI" id="CHEBI:60240"/>
    </ligand>
</feature>